<comment type="function">
    <text evidence="1">Negatively regulates transcription of bacterial ribonucleotide reductase nrd genes and operons by binding to NrdR-boxes.</text>
</comment>
<comment type="cofactor">
    <cofactor evidence="1">
        <name>Zn(2+)</name>
        <dbReference type="ChEBI" id="CHEBI:29105"/>
    </cofactor>
    <text evidence="1">Binds 1 zinc ion.</text>
</comment>
<comment type="similarity">
    <text evidence="1">Belongs to the NrdR family.</text>
</comment>
<organism>
    <name type="scientific">Alcanivorax borkumensis (strain ATCC 700651 / DSM 11573 / NCIMB 13689 / SK2)</name>
    <dbReference type="NCBI Taxonomy" id="393595"/>
    <lineage>
        <taxon>Bacteria</taxon>
        <taxon>Pseudomonadati</taxon>
        <taxon>Pseudomonadota</taxon>
        <taxon>Gammaproteobacteria</taxon>
        <taxon>Oceanospirillales</taxon>
        <taxon>Alcanivoracaceae</taxon>
        <taxon>Alcanivorax</taxon>
    </lineage>
</organism>
<accession>Q0VMH5</accession>
<feature type="chain" id="PRO_0000264157" description="Transcriptional repressor NrdR">
    <location>
        <begin position="1"/>
        <end position="164"/>
    </location>
</feature>
<feature type="domain" description="ATP-cone" evidence="1">
    <location>
        <begin position="49"/>
        <end position="139"/>
    </location>
</feature>
<feature type="zinc finger region" evidence="1">
    <location>
        <begin position="3"/>
        <end position="34"/>
    </location>
</feature>
<proteinExistence type="inferred from homology"/>
<gene>
    <name evidence="1" type="primary">nrdR</name>
    <name type="ordered locus">ABO_2175</name>
</gene>
<reference key="1">
    <citation type="journal article" date="2006" name="Nat. Biotechnol.">
        <title>Genome sequence of the ubiquitous hydrocarbon-degrading marine bacterium Alcanivorax borkumensis.</title>
        <authorList>
            <person name="Schneiker S."/>
            <person name="Martins dos Santos V.A.P."/>
            <person name="Bartels D."/>
            <person name="Bekel T."/>
            <person name="Brecht M."/>
            <person name="Buhrmester J."/>
            <person name="Chernikova T.N."/>
            <person name="Denaro R."/>
            <person name="Ferrer M."/>
            <person name="Gertler C."/>
            <person name="Goesmann A."/>
            <person name="Golyshina O.V."/>
            <person name="Kaminski F."/>
            <person name="Khachane A.N."/>
            <person name="Lang S."/>
            <person name="Linke B."/>
            <person name="McHardy A.C."/>
            <person name="Meyer F."/>
            <person name="Nechitaylo T."/>
            <person name="Puehler A."/>
            <person name="Regenhardt D."/>
            <person name="Rupp O."/>
            <person name="Sabirova J.S."/>
            <person name="Selbitschka W."/>
            <person name="Yakimov M.M."/>
            <person name="Timmis K.N."/>
            <person name="Vorhoelter F.-J."/>
            <person name="Weidner S."/>
            <person name="Kaiser O."/>
            <person name="Golyshin P.N."/>
        </authorList>
    </citation>
    <scope>NUCLEOTIDE SEQUENCE [LARGE SCALE GENOMIC DNA]</scope>
    <source>
        <strain>ATCC 700651 / DSM 11573 / NCIMB 13689 / SK2</strain>
    </source>
</reference>
<keyword id="KW-0067">ATP-binding</keyword>
<keyword id="KW-0238">DNA-binding</keyword>
<keyword id="KW-0479">Metal-binding</keyword>
<keyword id="KW-0547">Nucleotide-binding</keyword>
<keyword id="KW-1185">Reference proteome</keyword>
<keyword id="KW-0678">Repressor</keyword>
<keyword id="KW-0804">Transcription</keyword>
<keyword id="KW-0805">Transcription regulation</keyword>
<keyword id="KW-0862">Zinc</keyword>
<keyword id="KW-0863">Zinc-finger</keyword>
<name>NRDR_ALCBS</name>
<protein>
    <recommendedName>
        <fullName evidence="1">Transcriptional repressor NrdR</fullName>
    </recommendedName>
</protein>
<dbReference type="EMBL" id="AM286690">
    <property type="protein sequence ID" value="CAL17623.1"/>
    <property type="molecule type" value="Genomic_DNA"/>
</dbReference>
<dbReference type="RefSeq" id="WP_011589453.1">
    <property type="nucleotide sequence ID" value="NC_008260.1"/>
</dbReference>
<dbReference type="SMR" id="Q0VMH5"/>
<dbReference type="STRING" id="393595.ABO_2175"/>
<dbReference type="KEGG" id="abo:ABO_2175"/>
<dbReference type="eggNOG" id="COG1327">
    <property type="taxonomic scope" value="Bacteria"/>
</dbReference>
<dbReference type="HOGENOM" id="CLU_108412_0_0_6"/>
<dbReference type="OrthoDB" id="9807461at2"/>
<dbReference type="Proteomes" id="UP000008871">
    <property type="component" value="Chromosome"/>
</dbReference>
<dbReference type="GO" id="GO:0005524">
    <property type="term" value="F:ATP binding"/>
    <property type="evidence" value="ECO:0007669"/>
    <property type="project" value="UniProtKB-KW"/>
</dbReference>
<dbReference type="GO" id="GO:0003677">
    <property type="term" value="F:DNA binding"/>
    <property type="evidence" value="ECO:0007669"/>
    <property type="project" value="UniProtKB-KW"/>
</dbReference>
<dbReference type="GO" id="GO:0008270">
    <property type="term" value="F:zinc ion binding"/>
    <property type="evidence" value="ECO:0007669"/>
    <property type="project" value="UniProtKB-UniRule"/>
</dbReference>
<dbReference type="GO" id="GO:0045892">
    <property type="term" value="P:negative regulation of DNA-templated transcription"/>
    <property type="evidence" value="ECO:0007669"/>
    <property type="project" value="UniProtKB-UniRule"/>
</dbReference>
<dbReference type="HAMAP" id="MF_00440">
    <property type="entry name" value="NrdR"/>
    <property type="match status" value="1"/>
</dbReference>
<dbReference type="InterPro" id="IPR005144">
    <property type="entry name" value="ATP-cone_dom"/>
</dbReference>
<dbReference type="InterPro" id="IPR055173">
    <property type="entry name" value="NrdR-like_N"/>
</dbReference>
<dbReference type="InterPro" id="IPR003796">
    <property type="entry name" value="RNR_NrdR-like"/>
</dbReference>
<dbReference type="NCBIfam" id="TIGR00244">
    <property type="entry name" value="transcriptional regulator NrdR"/>
    <property type="match status" value="1"/>
</dbReference>
<dbReference type="PANTHER" id="PTHR30455">
    <property type="entry name" value="TRANSCRIPTIONAL REPRESSOR NRDR"/>
    <property type="match status" value="1"/>
</dbReference>
<dbReference type="PANTHER" id="PTHR30455:SF2">
    <property type="entry name" value="TRANSCRIPTIONAL REPRESSOR NRDR"/>
    <property type="match status" value="1"/>
</dbReference>
<dbReference type="Pfam" id="PF03477">
    <property type="entry name" value="ATP-cone"/>
    <property type="match status" value="1"/>
</dbReference>
<dbReference type="Pfam" id="PF22811">
    <property type="entry name" value="Zn_ribbon_NrdR"/>
    <property type="match status" value="1"/>
</dbReference>
<dbReference type="PROSITE" id="PS51161">
    <property type="entry name" value="ATP_CONE"/>
    <property type="match status" value="1"/>
</dbReference>
<evidence type="ECO:0000255" key="1">
    <source>
        <dbReference type="HAMAP-Rule" id="MF_00440"/>
    </source>
</evidence>
<sequence>MYCPFCSAQDTKVIDSRLVADGVQIRRRRECLSCTERFTTFETAELVMPRLVKTDGTRQPFDEAKLRAGMLRALEKRPVSMEDLEAAISRICHRLRATGERELPARELGEFVMEELQQLDDVAYVRFASVYRSFQDISEFSAEVDRLKKAGGKPGDKLGEPKES</sequence>